<feature type="chain" id="PRO_0000178649" description="Methylglyoxal synthase">
    <location>
        <begin position="1"/>
        <end position="126"/>
    </location>
</feature>
<feature type="domain" description="MGS-like" evidence="1">
    <location>
        <begin position="1"/>
        <end position="126"/>
    </location>
</feature>
<feature type="active site" description="Proton donor/acceptor" evidence="1">
    <location>
        <position position="61"/>
    </location>
</feature>
<feature type="binding site" evidence="1">
    <location>
        <position position="9"/>
    </location>
    <ligand>
        <name>substrate</name>
    </ligand>
</feature>
<feature type="binding site" evidence="1">
    <location>
        <position position="13"/>
    </location>
    <ligand>
        <name>substrate</name>
    </ligand>
</feature>
<feature type="binding site" evidence="1">
    <location>
        <begin position="35"/>
        <end position="38"/>
    </location>
    <ligand>
        <name>substrate</name>
    </ligand>
</feature>
<feature type="binding site" evidence="1">
    <location>
        <begin position="55"/>
        <end position="56"/>
    </location>
    <ligand>
        <name>substrate</name>
    </ligand>
</feature>
<feature type="binding site" evidence="1">
    <location>
        <position position="88"/>
    </location>
    <ligand>
        <name>substrate</name>
    </ligand>
</feature>
<reference key="1">
    <citation type="journal article" date="2004" name="Nat. Biotechnol.">
        <title>The genome sequence of the extreme thermophile Thermus thermophilus.</title>
        <authorList>
            <person name="Henne A."/>
            <person name="Brueggemann H."/>
            <person name="Raasch C."/>
            <person name="Wiezer A."/>
            <person name="Hartsch T."/>
            <person name="Liesegang H."/>
            <person name="Johann A."/>
            <person name="Lienard T."/>
            <person name="Gohl O."/>
            <person name="Martinez-Arias R."/>
            <person name="Jacobi C."/>
            <person name="Starkuviene V."/>
            <person name="Schlenczeck S."/>
            <person name="Dencker S."/>
            <person name="Huber R."/>
            <person name="Klenk H.-P."/>
            <person name="Kramer W."/>
            <person name="Merkl R."/>
            <person name="Gottschalk G."/>
            <person name="Fritz H.-J."/>
        </authorList>
    </citation>
    <scope>NUCLEOTIDE SEQUENCE [LARGE SCALE GENOMIC DNA]</scope>
    <source>
        <strain>ATCC BAA-163 / DSM 7039 / HB27</strain>
    </source>
</reference>
<protein>
    <recommendedName>
        <fullName evidence="1">Methylglyoxal synthase</fullName>
        <shortName evidence="1">MGS</shortName>
        <ecNumber evidence="1">4.2.3.3</ecNumber>
    </recommendedName>
</protein>
<proteinExistence type="inferred from homology"/>
<gene>
    <name evidence="1" type="primary">mgsA</name>
    <name type="ordered locus">TT_C1443</name>
</gene>
<evidence type="ECO:0000255" key="1">
    <source>
        <dbReference type="HAMAP-Rule" id="MF_00549"/>
    </source>
</evidence>
<evidence type="ECO:0000305" key="2"/>
<accession>Q72HP3</accession>
<organism>
    <name type="scientific">Thermus thermophilus (strain ATCC BAA-163 / DSM 7039 / HB27)</name>
    <dbReference type="NCBI Taxonomy" id="262724"/>
    <lineage>
        <taxon>Bacteria</taxon>
        <taxon>Thermotogati</taxon>
        <taxon>Deinococcota</taxon>
        <taxon>Deinococci</taxon>
        <taxon>Thermales</taxon>
        <taxon>Thermaceae</taxon>
        <taxon>Thermus</taxon>
    </lineage>
</organism>
<sequence length="126" mass="13380">MKALALIAHDAKKDEMVAFCLRHKDVLARYPLLATGTTGARIQEATGLAVERVLSGPLGGDLQIGARVAEGKVLAVVFLQDPLTAKPHEPDVQALMRVCNVHGVPLATNLVAAEALIAWIRKGTPQ</sequence>
<name>MGSA_THET2</name>
<comment type="function">
    <text evidence="1">Catalyzes the formation of methylglyoxal from dihydroxyacetone phosphate.</text>
</comment>
<comment type="catalytic activity">
    <reaction evidence="1">
        <text>dihydroxyacetone phosphate = methylglyoxal + phosphate</text>
        <dbReference type="Rhea" id="RHEA:17937"/>
        <dbReference type="ChEBI" id="CHEBI:17158"/>
        <dbReference type="ChEBI" id="CHEBI:43474"/>
        <dbReference type="ChEBI" id="CHEBI:57642"/>
        <dbReference type="EC" id="4.2.3.3"/>
    </reaction>
</comment>
<comment type="similarity">
    <text evidence="1">Belongs to the methylglyoxal synthase family.</text>
</comment>
<comment type="sequence caution" evidence="2">
    <conflict type="erroneous initiation">
        <sequence resource="EMBL-CDS" id="AAS81785"/>
    </conflict>
</comment>
<keyword id="KW-0456">Lyase</keyword>
<dbReference type="EC" id="4.2.3.3" evidence="1"/>
<dbReference type="EMBL" id="AE017221">
    <property type="protein sequence ID" value="AAS81785.1"/>
    <property type="status" value="ALT_INIT"/>
    <property type="molecule type" value="Genomic_DNA"/>
</dbReference>
<dbReference type="RefSeq" id="WP_011228922.1">
    <property type="nucleotide sequence ID" value="NC_005835.1"/>
</dbReference>
<dbReference type="SMR" id="Q72HP3"/>
<dbReference type="GeneID" id="3168681"/>
<dbReference type="KEGG" id="tth:TT_C1443"/>
<dbReference type="eggNOG" id="COG1803">
    <property type="taxonomic scope" value="Bacteria"/>
</dbReference>
<dbReference type="HOGENOM" id="CLU_120420_1_0_0"/>
<dbReference type="OrthoDB" id="9787147at2"/>
<dbReference type="Proteomes" id="UP000000592">
    <property type="component" value="Chromosome"/>
</dbReference>
<dbReference type="GO" id="GO:0005829">
    <property type="term" value="C:cytosol"/>
    <property type="evidence" value="ECO:0007669"/>
    <property type="project" value="TreeGrafter"/>
</dbReference>
<dbReference type="GO" id="GO:0008929">
    <property type="term" value="F:methylglyoxal synthase activity"/>
    <property type="evidence" value="ECO:0007669"/>
    <property type="project" value="UniProtKB-UniRule"/>
</dbReference>
<dbReference type="GO" id="GO:0019242">
    <property type="term" value="P:methylglyoxal biosynthetic process"/>
    <property type="evidence" value="ECO:0007669"/>
    <property type="project" value="UniProtKB-UniRule"/>
</dbReference>
<dbReference type="CDD" id="cd01422">
    <property type="entry name" value="MGS"/>
    <property type="match status" value="1"/>
</dbReference>
<dbReference type="Gene3D" id="3.40.50.1380">
    <property type="entry name" value="Methylglyoxal synthase-like domain"/>
    <property type="match status" value="1"/>
</dbReference>
<dbReference type="HAMAP" id="MF_00549">
    <property type="entry name" value="Methylglyoxal_synth"/>
    <property type="match status" value="1"/>
</dbReference>
<dbReference type="InterPro" id="IPR004363">
    <property type="entry name" value="Methylgl_synth"/>
</dbReference>
<dbReference type="InterPro" id="IPR018148">
    <property type="entry name" value="Methylglyoxal_synth_AS"/>
</dbReference>
<dbReference type="InterPro" id="IPR011607">
    <property type="entry name" value="MGS-like_dom"/>
</dbReference>
<dbReference type="InterPro" id="IPR036914">
    <property type="entry name" value="MGS-like_dom_sf"/>
</dbReference>
<dbReference type="NCBIfam" id="TIGR00160">
    <property type="entry name" value="MGSA"/>
    <property type="match status" value="1"/>
</dbReference>
<dbReference type="NCBIfam" id="NF003559">
    <property type="entry name" value="PRK05234.1"/>
    <property type="match status" value="1"/>
</dbReference>
<dbReference type="PANTHER" id="PTHR30492">
    <property type="entry name" value="METHYLGLYOXAL SYNTHASE"/>
    <property type="match status" value="1"/>
</dbReference>
<dbReference type="PANTHER" id="PTHR30492:SF0">
    <property type="entry name" value="METHYLGLYOXAL SYNTHASE"/>
    <property type="match status" value="1"/>
</dbReference>
<dbReference type="Pfam" id="PF02142">
    <property type="entry name" value="MGS"/>
    <property type="match status" value="1"/>
</dbReference>
<dbReference type="PIRSF" id="PIRSF006614">
    <property type="entry name" value="Methylglyox_syn"/>
    <property type="match status" value="1"/>
</dbReference>
<dbReference type="SMART" id="SM00851">
    <property type="entry name" value="MGS"/>
    <property type="match status" value="1"/>
</dbReference>
<dbReference type="SUPFAM" id="SSF52335">
    <property type="entry name" value="Methylglyoxal synthase-like"/>
    <property type="match status" value="1"/>
</dbReference>
<dbReference type="PROSITE" id="PS01335">
    <property type="entry name" value="METHYLGLYOXAL_SYNTH"/>
    <property type="match status" value="1"/>
</dbReference>
<dbReference type="PROSITE" id="PS51855">
    <property type="entry name" value="MGS"/>
    <property type="match status" value="1"/>
</dbReference>